<protein>
    <recommendedName>
        <fullName evidence="1">Isoleucine--tRNA ligase</fullName>
        <ecNumber evidence="1">6.1.1.5</ecNumber>
    </recommendedName>
    <alternativeName>
        <fullName evidence="1">Isoleucyl-tRNA synthetase</fullName>
        <shortName evidence="1">IleRS</shortName>
    </alternativeName>
</protein>
<keyword id="KW-0030">Aminoacyl-tRNA synthetase</keyword>
<keyword id="KW-0067">ATP-binding</keyword>
<keyword id="KW-0963">Cytoplasm</keyword>
<keyword id="KW-0436">Ligase</keyword>
<keyword id="KW-0479">Metal-binding</keyword>
<keyword id="KW-0547">Nucleotide-binding</keyword>
<keyword id="KW-0648">Protein biosynthesis</keyword>
<keyword id="KW-1185">Reference proteome</keyword>
<keyword id="KW-0862">Zinc</keyword>
<sequence length="915" mass="103964">MDYKETIELPSTTFPMRASLPENEPKRYEKWREEKVYAKMQKNREGAKECFNLHDGPPYANGHLHIGHALNKILKDTIVKYHYFQGKKVSYVPGWDCHGLPIEQQVEKKLGKEKKDSLPKEKIRELCRAHAAEFIAIQKSEFLELGVVGDFENPYKTMDFPFEAAIYRALCQIAQKGLLAERSKPVYWSWACKTALAEAEVEYQDKVSDSVYVAFPLQKEALERLGVKRAVLVIWTTTPWTLPANVAVALRPKELYVLMSDGKVVAKNLVEKLTALGVVGGSILQEFDSSTLENLLAQNPLNGRDSRIVLGEHVEVSDGTGCVHTAPGHGEDDYRVGLRYNLPVLMPVDDEGRFDETIQRESLLPEADSFVGMHIFEAQKRILGLLGDALLKHTQITHSYPHCWRSHEPVIFRATKQWFVLMDESIQGVGKSLREIALEEIQKTCFYPDHGIKRLGSMIENRPDWCISRQRDWGVPIAFFRDRQSGEMIFDAEVLEHIAGIFEQEGCDAWWSRDNAYLLPASWKNRADSLEKIHHILDVWFDSGSTWKAVLLSSAYEAGNYPASMYLEGSDQHRGWFQSSLLVSCAINHHAPYQSILTHGFTVDEKGEKMSKSKGNVIAPKDVLKEFGSEILRLWVASSDYQSDLKISQNILKQVAENYRKIRNTIRFLLANTNDLERLSPLEDLSEIDRWFMQEARVALEETNALFGRYDFSKGLQEINYFITNALSGIYLDLCKDSLYCDGKNSKTRRASQSAMAYTLRALLATLAPVLTYTVDEALEHAGEVLKGGAQSVFDLVYEPLPLVEAPKVDFVKLEELRAKFFEVVDGLKKEKRLKNTLEVNLLLPPKEEDFGGLAKWMMVSEVLKEAKGEELASFELAGLTYRLLRATLHRCPRCWQFVSPKEETLCERCAGAIG</sequence>
<reference key="1">
    <citation type="journal article" date="2003" name="Proc. Natl. Acad. Sci. U.S.A.">
        <title>Complete genome sequence and analysis of Wolinella succinogenes.</title>
        <authorList>
            <person name="Baar C."/>
            <person name="Eppinger M."/>
            <person name="Raddatz G."/>
            <person name="Simon J."/>
            <person name="Lanz C."/>
            <person name="Klimmek O."/>
            <person name="Nandakumar R."/>
            <person name="Gross R."/>
            <person name="Rosinus A."/>
            <person name="Keller H."/>
            <person name="Jagtap P."/>
            <person name="Linke B."/>
            <person name="Meyer F."/>
            <person name="Lederer H."/>
            <person name="Schuster S.C."/>
        </authorList>
    </citation>
    <scope>NUCLEOTIDE SEQUENCE [LARGE SCALE GENOMIC DNA]</scope>
    <source>
        <strain>ATCC 29543 / DSM 1740 / CCUG 13145 / JCM 31913 / LMG 7466 / NCTC 11488 / FDC 602W</strain>
    </source>
</reference>
<comment type="function">
    <text evidence="1">Catalyzes the attachment of isoleucine to tRNA(Ile). As IleRS can inadvertently accommodate and process structurally similar amino acids such as valine, to avoid such errors it has two additional distinct tRNA(Ile)-dependent editing activities. One activity is designated as 'pretransfer' editing and involves the hydrolysis of activated Val-AMP. The other activity is designated 'posttransfer' editing and involves deacylation of mischarged Val-tRNA(Ile).</text>
</comment>
<comment type="catalytic activity">
    <reaction evidence="1">
        <text>tRNA(Ile) + L-isoleucine + ATP = L-isoleucyl-tRNA(Ile) + AMP + diphosphate</text>
        <dbReference type="Rhea" id="RHEA:11060"/>
        <dbReference type="Rhea" id="RHEA-COMP:9666"/>
        <dbReference type="Rhea" id="RHEA-COMP:9695"/>
        <dbReference type="ChEBI" id="CHEBI:30616"/>
        <dbReference type="ChEBI" id="CHEBI:33019"/>
        <dbReference type="ChEBI" id="CHEBI:58045"/>
        <dbReference type="ChEBI" id="CHEBI:78442"/>
        <dbReference type="ChEBI" id="CHEBI:78528"/>
        <dbReference type="ChEBI" id="CHEBI:456215"/>
        <dbReference type="EC" id="6.1.1.5"/>
    </reaction>
</comment>
<comment type="cofactor">
    <cofactor evidence="1">
        <name>Zn(2+)</name>
        <dbReference type="ChEBI" id="CHEBI:29105"/>
    </cofactor>
    <text evidence="1">Binds 1 zinc ion per subunit.</text>
</comment>
<comment type="subunit">
    <text evidence="1">Monomer.</text>
</comment>
<comment type="subcellular location">
    <subcellularLocation>
        <location evidence="1">Cytoplasm</location>
    </subcellularLocation>
</comment>
<comment type="domain">
    <text evidence="1">IleRS has two distinct active sites: one for aminoacylation and one for editing. The misactivated valine is translocated from the active site to the editing site, which sterically excludes the correctly activated isoleucine. The single editing site contains two valyl binding pockets, one specific for each substrate (Val-AMP or Val-tRNA(Ile)).</text>
</comment>
<comment type="similarity">
    <text evidence="1">Belongs to the class-I aminoacyl-tRNA synthetase family. IleS type 1 subfamily.</text>
</comment>
<organism>
    <name type="scientific">Wolinella succinogenes (strain ATCC 29543 / DSM 1740 / CCUG 13145 / JCM 31913 / LMG 7466 / NCTC 11488 / FDC 602W)</name>
    <name type="common">Vibrio succinogenes</name>
    <dbReference type="NCBI Taxonomy" id="273121"/>
    <lineage>
        <taxon>Bacteria</taxon>
        <taxon>Pseudomonadati</taxon>
        <taxon>Campylobacterota</taxon>
        <taxon>Epsilonproteobacteria</taxon>
        <taxon>Campylobacterales</taxon>
        <taxon>Helicobacteraceae</taxon>
        <taxon>Wolinella</taxon>
    </lineage>
</organism>
<dbReference type="EC" id="6.1.1.5" evidence="1"/>
<dbReference type="EMBL" id="BX571657">
    <property type="protein sequence ID" value="CAE09339.1"/>
    <property type="molecule type" value="Genomic_DNA"/>
</dbReference>
<dbReference type="RefSeq" id="WP_011138139.1">
    <property type="nucleotide sequence ID" value="NC_005090.1"/>
</dbReference>
<dbReference type="SMR" id="Q7MAL0"/>
<dbReference type="STRING" id="273121.WS0176"/>
<dbReference type="KEGG" id="wsu:WS0176"/>
<dbReference type="eggNOG" id="COG0060">
    <property type="taxonomic scope" value="Bacteria"/>
</dbReference>
<dbReference type="HOGENOM" id="CLU_001493_7_1_7"/>
<dbReference type="Proteomes" id="UP000000422">
    <property type="component" value="Chromosome"/>
</dbReference>
<dbReference type="GO" id="GO:0005829">
    <property type="term" value="C:cytosol"/>
    <property type="evidence" value="ECO:0007669"/>
    <property type="project" value="TreeGrafter"/>
</dbReference>
<dbReference type="GO" id="GO:0002161">
    <property type="term" value="F:aminoacyl-tRNA deacylase activity"/>
    <property type="evidence" value="ECO:0007669"/>
    <property type="project" value="InterPro"/>
</dbReference>
<dbReference type="GO" id="GO:0005524">
    <property type="term" value="F:ATP binding"/>
    <property type="evidence" value="ECO:0007669"/>
    <property type="project" value="UniProtKB-UniRule"/>
</dbReference>
<dbReference type="GO" id="GO:0004822">
    <property type="term" value="F:isoleucine-tRNA ligase activity"/>
    <property type="evidence" value="ECO:0007669"/>
    <property type="project" value="UniProtKB-UniRule"/>
</dbReference>
<dbReference type="GO" id="GO:0000049">
    <property type="term" value="F:tRNA binding"/>
    <property type="evidence" value="ECO:0007669"/>
    <property type="project" value="InterPro"/>
</dbReference>
<dbReference type="GO" id="GO:0008270">
    <property type="term" value="F:zinc ion binding"/>
    <property type="evidence" value="ECO:0007669"/>
    <property type="project" value="UniProtKB-UniRule"/>
</dbReference>
<dbReference type="GO" id="GO:0006428">
    <property type="term" value="P:isoleucyl-tRNA aminoacylation"/>
    <property type="evidence" value="ECO:0007669"/>
    <property type="project" value="UniProtKB-UniRule"/>
</dbReference>
<dbReference type="CDD" id="cd07960">
    <property type="entry name" value="Anticodon_Ia_Ile_BEm"/>
    <property type="match status" value="1"/>
</dbReference>
<dbReference type="CDD" id="cd00818">
    <property type="entry name" value="IleRS_core"/>
    <property type="match status" value="1"/>
</dbReference>
<dbReference type="Gene3D" id="1.10.730.20">
    <property type="match status" value="1"/>
</dbReference>
<dbReference type="Gene3D" id="3.40.50.620">
    <property type="entry name" value="HUPs"/>
    <property type="match status" value="2"/>
</dbReference>
<dbReference type="Gene3D" id="1.10.10.830">
    <property type="entry name" value="Ile-tRNA synthetase CP2 domain-like"/>
    <property type="match status" value="1"/>
</dbReference>
<dbReference type="Gene3D" id="3.90.740.10">
    <property type="entry name" value="Valyl/Leucyl/Isoleucyl-tRNA synthetase, editing domain"/>
    <property type="match status" value="1"/>
</dbReference>
<dbReference type="HAMAP" id="MF_02002">
    <property type="entry name" value="Ile_tRNA_synth_type1"/>
    <property type="match status" value="1"/>
</dbReference>
<dbReference type="InterPro" id="IPR001412">
    <property type="entry name" value="aa-tRNA-synth_I_CS"/>
</dbReference>
<dbReference type="InterPro" id="IPR002300">
    <property type="entry name" value="aa-tRNA-synth_Ia"/>
</dbReference>
<dbReference type="InterPro" id="IPR033708">
    <property type="entry name" value="Anticodon_Ile_BEm"/>
</dbReference>
<dbReference type="InterPro" id="IPR002301">
    <property type="entry name" value="Ile-tRNA-ligase"/>
</dbReference>
<dbReference type="InterPro" id="IPR023585">
    <property type="entry name" value="Ile-tRNA-ligase_type1"/>
</dbReference>
<dbReference type="InterPro" id="IPR050081">
    <property type="entry name" value="Ile-tRNA_ligase"/>
</dbReference>
<dbReference type="InterPro" id="IPR013155">
    <property type="entry name" value="M/V/L/I-tRNA-synth_anticd-bd"/>
</dbReference>
<dbReference type="InterPro" id="IPR014729">
    <property type="entry name" value="Rossmann-like_a/b/a_fold"/>
</dbReference>
<dbReference type="InterPro" id="IPR009080">
    <property type="entry name" value="tRNAsynth_Ia_anticodon-bd"/>
</dbReference>
<dbReference type="InterPro" id="IPR009008">
    <property type="entry name" value="Val/Leu/Ile-tRNA-synth_edit"/>
</dbReference>
<dbReference type="NCBIfam" id="TIGR00392">
    <property type="entry name" value="ileS"/>
    <property type="match status" value="1"/>
</dbReference>
<dbReference type="PANTHER" id="PTHR42765:SF1">
    <property type="entry name" value="ISOLEUCINE--TRNA LIGASE, MITOCHONDRIAL"/>
    <property type="match status" value="1"/>
</dbReference>
<dbReference type="PANTHER" id="PTHR42765">
    <property type="entry name" value="SOLEUCYL-TRNA SYNTHETASE"/>
    <property type="match status" value="1"/>
</dbReference>
<dbReference type="Pfam" id="PF08264">
    <property type="entry name" value="Anticodon_1"/>
    <property type="match status" value="1"/>
</dbReference>
<dbReference type="Pfam" id="PF00133">
    <property type="entry name" value="tRNA-synt_1"/>
    <property type="match status" value="1"/>
</dbReference>
<dbReference type="PRINTS" id="PR00984">
    <property type="entry name" value="TRNASYNTHILE"/>
</dbReference>
<dbReference type="SUPFAM" id="SSF47323">
    <property type="entry name" value="Anticodon-binding domain of a subclass of class I aminoacyl-tRNA synthetases"/>
    <property type="match status" value="1"/>
</dbReference>
<dbReference type="SUPFAM" id="SSF52374">
    <property type="entry name" value="Nucleotidylyl transferase"/>
    <property type="match status" value="1"/>
</dbReference>
<dbReference type="SUPFAM" id="SSF50677">
    <property type="entry name" value="ValRS/IleRS/LeuRS editing domain"/>
    <property type="match status" value="1"/>
</dbReference>
<dbReference type="PROSITE" id="PS00178">
    <property type="entry name" value="AA_TRNA_LIGASE_I"/>
    <property type="match status" value="1"/>
</dbReference>
<name>SYI_WOLSU</name>
<feature type="chain" id="PRO_0000098503" description="Isoleucine--tRNA ligase">
    <location>
        <begin position="1"/>
        <end position="915"/>
    </location>
</feature>
<feature type="short sequence motif" description="'HIGH' region">
    <location>
        <begin position="58"/>
        <end position="68"/>
    </location>
</feature>
<feature type="short sequence motif" description="'KMSKS' region">
    <location>
        <begin position="609"/>
        <end position="613"/>
    </location>
</feature>
<feature type="binding site" evidence="1">
    <location>
        <position position="568"/>
    </location>
    <ligand>
        <name>L-isoleucyl-5'-AMP</name>
        <dbReference type="ChEBI" id="CHEBI:178002"/>
    </ligand>
</feature>
<feature type="binding site" evidence="1">
    <location>
        <position position="612"/>
    </location>
    <ligand>
        <name>ATP</name>
        <dbReference type="ChEBI" id="CHEBI:30616"/>
    </ligand>
</feature>
<feature type="binding site" evidence="1">
    <location>
        <position position="892"/>
    </location>
    <ligand>
        <name>Zn(2+)</name>
        <dbReference type="ChEBI" id="CHEBI:29105"/>
    </ligand>
</feature>
<feature type="binding site" evidence="1">
    <location>
        <position position="895"/>
    </location>
    <ligand>
        <name>Zn(2+)</name>
        <dbReference type="ChEBI" id="CHEBI:29105"/>
    </ligand>
</feature>
<feature type="binding site" evidence="1">
    <location>
        <position position="907"/>
    </location>
    <ligand>
        <name>Zn(2+)</name>
        <dbReference type="ChEBI" id="CHEBI:29105"/>
    </ligand>
</feature>
<feature type="binding site" evidence="1">
    <location>
        <position position="910"/>
    </location>
    <ligand>
        <name>Zn(2+)</name>
        <dbReference type="ChEBI" id="CHEBI:29105"/>
    </ligand>
</feature>
<evidence type="ECO:0000255" key="1">
    <source>
        <dbReference type="HAMAP-Rule" id="MF_02002"/>
    </source>
</evidence>
<gene>
    <name evidence="1" type="primary">ileS</name>
    <name type="ordered locus">WS0176</name>
</gene>
<accession>Q7MAL0</accession>
<proteinExistence type="inferred from homology"/>